<organism>
    <name type="scientific">Arthroderma gypseum (strain ATCC MYA-4604 / CBS 118893)</name>
    <name type="common">Microsporum gypseum</name>
    <dbReference type="NCBI Taxonomy" id="535722"/>
    <lineage>
        <taxon>Eukaryota</taxon>
        <taxon>Fungi</taxon>
        <taxon>Dikarya</taxon>
        <taxon>Ascomycota</taxon>
        <taxon>Pezizomycotina</taxon>
        <taxon>Eurotiomycetes</taxon>
        <taxon>Eurotiomycetidae</taxon>
        <taxon>Onygenales</taxon>
        <taxon>Arthrodermataceae</taxon>
        <taxon>Nannizzia</taxon>
    </lineage>
</organism>
<feature type="signal peptide" evidence="2">
    <location>
        <begin position="1"/>
        <end position="19"/>
    </location>
</feature>
<feature type="propeptide" id="PRO_0000407152" evidence="1">
    <location>
        <begin position="20"/>
        <end position="243"/>
    </location>
</feature>
<feature type="chain" id="PRO_0000407153" description="Extracellular metalloproteinase 1">
    <location>
        <begin position="244"/>
        <end position="632"/>
    </location>
</feature>
<feature type="active site" evidence="3">
    <location>
        <position position="428"/>
    </location>
</feature>
<feature type="binding site" evidence="3">
    <location>
        <position position="427"/>
    </location>
    <ligand>
        <name>Zn(2+)</name>
        <dbReference type="ChEBI" id="CHEBI:29105"/>
        <note>catalytic</note>
    </ligand>
</feature>
<feature type="binding site" evidence="3">
    <location>
        <position position="431"/>
    </location>
    <ligand>
        <name>Zn(2+)</name>
        <dbReference type="ChEBI" id="CHEBI:29105"/>
        <note>catalytic</note>
    </ligand>
</feature>
<feature type="glycosylation site" description="N-linked (GlcNAc...) asparagine" evidence="2">
    <location>
        <position position="284"/>
    </location>
</feature>
<feature type="glycosylation site" description="N-linked (GlcNAc...) asparagine" evidence="2">
    <location>
        <position position="591"/>
    </location>
</feature>
<feature type="glycosylation site" description="N-linked (GlcNAc...) asparagine" evidence="2">
    <location>
        <position position="620"/>
    </location>
</feature>
<keyword id="KW-0325">Glycoprotein</keyword>
<keyword id="KW-0378">Hydrolase</keyword>
<keyword id="KW-0479">Metal-binding</keyword>
<keyword id="KW-0482">Metalloprotease</keyword>
<keyword id="KW-0645">Protease</keyword>
<keyword id="KW-1185">Reference proteome</keyword>
<keyword id="KW-0964">Secreted</keyword>
<keyword id="KW-0732">Signal</keyword>
<keyword id="KW-0862">Zinc</keyword>
<keyword id="KW-0865">Zymogen</keyword>
<comment type="function">
    <text evidence="1">Secreted metalloproteinase that allows assimilation of proteinaceous substrates and probably acts as a virulence factor.</text>
</comment>
<comment type="cofactor">
    <cofactor evidence="1">
        <name>Zn(2+)</name>
        <dbReference type="ChEBI" id="CHEBI:29105"/>
    </cofactor>
    <text evidence="1">Binds 1 zinc ion per subunit.</text>
</comment>
<comment type="subcellular location">
    <subcellularLocation>
        <location evidence="1">Secreted</location>
    </subcellularLocation>
</comment>
<comment type="similarity">
    <text evidence="4">Belongs to the peptidase M36 family.</text>
</comment>
<sequence>MHGLLLAAGLLSLPLRVLAHPQPSTSLTSQGVDLNAYRMADRSSYMSSDEMKLEQPSISSLSGGNYVETATEVVKRMMPGVTFRMVDDHYVGESGISHVYFRQTMHGMDIDNSDFNVNIGKDGKVLSFGNSFYTNPTPDKAPVEKRDFSDPMKALHGARKALNLPINADKATIKSMNEHEVMFMGTSGALSDPQGKLCYMAKEDGTLALTWRVETDMGDNWLLSYVDAKDTDKVHNVVDYVSHATYQVYPWPVPDPTEGKRAVLQNPWNLKASPFTWISDGKNNYSTTRGNNAIAQANFDGGSDYLNNYRPNNKNLKFEYPYAPNMSPPKSYIDASVTQLFYSANMVHDLYYMLGFTEKAGNFQVNNRNQGGKGGDFVILNAQDGSGTNNANFATPPDGQPGRMRVYIWTKAKPARDSSFEAGTVIHEYTHGLSNRLCGGPANSACLNGMESGGMGEGWGDFFATAIRLKPNDNRNANYVHGEWVNNSPRGNRMFPYSTSLQTNPLVYTSCNKYNEVHAIGTVWCSILYEVLWNLIDKHGKNDGPTPVFENGVPKDGKYLAMKLVLDGMAIQPCKPTFVQARNAILDADMNLTKGANKCELWKAFAKRGLGTGAKYDPKNRTGSKAVPKECQ</sequence>
<evidence type="ECO:0000250" key="1"/>
<evidence type="ECO:0000255" key="2"/>
<evidence type="ECO:0000255" key="3">
    <source>
        <dbReference type="PROSITE-ProRule" id="PRU10095"/>
    </source>
</evidence>
<evidence type="ECO:0000305" key="4"/>
<protein>
    <recommendedName>
        <fullName>Extracellular metalloproteinase 1</fullName>
        <ecNumber>3.4.24.-</ecNumber>
    </recommendedName>
    <alternativeName>
        <fullName>Elastinolytic metalloproteinase MEP1</fullName>
    </alternativeName>
    <alternativeName>
        <fullName>Fungalysin MEP1</fullName>
    </alternativeName>
</protein>
<proteinExistence type="inferred from homology"/>
<name>MEP1_ARTGP</name>
<accession>E4UYA3</accession>
<reference key="1">
    <citation type="journal article" date="2012" name="MBio">
        <title>Comparative genome analysis of Trichophyton rubrum and related dermatophytes reveals candidate genes involved in infection.</title>
        <authorList>
            <person name="Martinez D.A."/>
            <person name="Oliver B.G."/>
            <person name="Graeser Y."/>
            <person name="Goldberg J.M."/>
            <person name="Li W."/>
            <person name="Martinez-Rossi N.M."/>
            <person name="Monod M."/>
            <person name="Shelest E."/>
            <person name="Barton R.C."/>
            <person name="Birch E."/>
            <person name="Brakhage A.A."/>
            <person name="Chen Z."/>
            <person name="Gurr S.J."/>
            <person name="Heiman D."/>
            <person name="Heitman J."/>
            <person name="Kosti I."/>
            <person name="Rossi A."/>
            <person name="Saif S."/>
            <person name="Samalova M."/>
            <person name="Saunders C.W."/>
            <person name="Shea T."/>
            <person name="Summerbell R.C."/>
            <person name="Xu J."/>
            <person name="Young S."/>
            <person name="Zeng Q."/>
            <person name="Birren B.W."/>
            <person name="Cuomo C.A."/>
            <person name="White T.C."/>
        </authorList>
    </citation>
    <scope>NUCLEOTIDE SEQUENCE [LARGE SCALE GENOMIC DNA]</scope>
    <source>
        <strain>ATCC MYA-4604 / CBS 118893</strain>
    </source>
</reference>
<gene>
    <name type="primary">MEP1</name>
    <name type="ORF">MGYG_05070</name>
</gene>
<dbReference type="EC" id="3.4.24.-"/>
<dbReference type="EMBL" id="DS989825">
    <property type="protein sequence ID" value="EFR02066.1"/>
    <property type="molecule type" value="Genomic_DNA"/>
</dbReference>
<dbReference type="RefSeq" id="XP_003172477.1">
    <property type="nucleotide sequence ID" value="XM_003172429.1"/>
</dbReference>
<dbReference type="SMR" id="E4UYA3"/>
<dbReference type="MEROPS" id="M36.001"/>
<dbReference type="GlyCosmos" id="E4UYA3">
    <property type="glycosylation" value="3 sites, No reported glycans"/>
</dbReference>
<dbReference type="GeneID" id="10027747"/>
<dbReference type="VEuPathDB" id="FungiDB:MGYG_05070"/>
<dbReference type="eggNOG" id="ENOG502QTDC">
    <property type="taxonomic scope" value="Eukaryota"/>
</dbReference>
<dbReference type="HOGENOM" id="CLU_012703_3_0_1"/>
<dbReference type="InParanoid" id="E4UYA3"/>
<dbReference type="OMA" id="YSANMVH"/>
<dbReference type="OrthoDB" id="3227768at2759"/>
<dbReference type="Proteomes" id="UP000002669">
    <property type="component" value="Unassembled WGS sequence"/>
</dbReference>
<dbReference type="GO" id="GO:0005576">
    <property type="term" value="C:extracellular region"/>
    <property type="evidence" value="ECO:0007669"/>
    <property type="project" value="UniProtKB-SubCell"/>
</dbReference>
<dbReference type="GO" id="GO:0004222">
    <property type="term" value="F:metalloendopeptidase activity"/>
    <property type="evidence" value="ECO:0007669"/>
    <property type="project" value="InterPro"/>
</dbReference>
<dbReference type="GO" id="GO:0008270">
    <property type="term" value="F:zinc ion binding"/>
    <property type="evidence" value="ECO:0007669"/>
    <property type="project" value="InterPro"/>
</dbReference>
<dbReference type="GO" id="GO:0006508">
    <property type="term" value="P:proteolysis"/>
    <property type="evidence" value="ECO:0007669"/>
    <property type="project" value="UniProtKB-KW"/>
</dbReference>
<dbReference type="CDD" id="cd09596">
    <property type="entry name" value="M36"/>
    <property type="match status" value="1"/>
</dbReference>
<dbReference type="Gene3D" id="3.10.170.10">
    <property type="match status" value="1"/>
</dbReference>
<dbReference type="Gene3D" id="1.10.390.10">
    <property type="entry name" value="Neutral Protease Domain 2"/>
    <property type="match status" value="1"/>
</dbReference>
<dbReference type="InterPro" id="IPR011096">
    <property type="entry name" value="FTP_domain"/>
</dbReference>
<dbReference type="InterPro" id="IPR050371">
    <property type="entry name" value="Fungal_virulence_M36"/>
</dbReference>
<dbReference type="InterPro" id="IPR001842">
    <property type="entry name" value="Peptidase_M36"/>
</dbReference>
<dbReference type="InterPro" id="IPR027268">
    <property type="entry name" value="Peptidase_M4/M1_CTD_sf"/>
</dbReference>
<dbReference type="PANTHER" id="PTHR33478">
    <property type="entry name" value="EXTRACELLULAR METALLOPROTEINASE MEP"/>
    <property type="match status" value="1"/>
</dbReference>
<dbReference type="PANTHER" id="PTHR33478:SF1">
    <property type="entry name" value="EXTRACELLULAR METALLOPROTEINASE MEP"/>
    <property type="match status" value="1"/>
</dbReference>
<dbReference type="Pfam" id="PF07504">
    <property type="entry name" value="FTP"/>
    <property type="match status" value="1"/>
</dbReference>
<dbReference type="Pfam" id="PF02128">
    <property type="entry name" value="Peptidase_M36"/>
    <property type="match status" value="1"/>
</dbReference>
<dbReference type="PRINTS" id="PR00999">
    <property type="entry name" value="FUNGALYSIN"/>
</dbReference>
<dbReference type="SUPFAM" id="SSF55486">
    <property type="entry name" value="Metalloproteases ('zincins'), catalytic domain"/>
    <property type="match status" value="1"/>
</dbReference>
<dbReference type="PROSITE" id="PS00142">
    <property type="entry name" value="ZINC_PROTEASE"/>
    <property type="match status" value="1"/>
</dbReference>